<protein>
    <recommendedName>
        <fullName evidence="1">Small ribosomal subunit protein bS6</fullName>
    </recommendedName>
    <alternativeName>
        <fullName evidence="2">30S ribosomal protein S6</fullName>
    </alternativeName>
</protein>
<gene>
    <name evidence="1" type="primary">rpsF</name>
    <name type="ordered locus">Clos_0035</name>
</gene>
<name>RS6_ALKOO</name>
<sequence>MNKYELVYILKSNVEEEKRNQLLDKFRGIIEADGTIENVDEWGNRRLAYEINKINEGYYTLVNFSAAADVPKELDRNLKIADEVIRHMIIRLEK</sequence>
<evidence type="ECO:0000255" key="1">
    <source>
        <dbReference type="HAMAP-Rule" id="MF_00360"/>
    </source>
</evidence>
<evidence type="ECO:0000305" key="2"/>
<comment type="function">
    <text evidence="1">Binds together with bS18 to 16S ribosomal RNA.</text>
</comment>
<comment type="similarity">
    <text evidence="1">Belongs to the bacterial ribosomal protein bS6 family.</text>
</comment>
<organism>
    <name type="scientific">Alkaliphilus oremlandii (strain OhILAs)</name>
    <name type="common">Clostridium oremlandii (strain OhILAs)</name>
    <dbReference type="NCBI Taxonomy" id="350688"/>
    <lineage>
        <taxon>Bacteria</taxon>
        <taxon>Bacillati</taxon>
        <taxon>Bacillota</taxon>
        <taxon>Clostridia</taxon>
        <taxon>Peptostreptococcales</taxon>
        <taxon>Natronincolaceae</taxon>
        <taxon>Alkaliphilus</taxon>
    </lineage>
</organism>
<feature type="chain" id="PRO_1000059853" description="Small ribosomal subunit protein bS6">
    <location>
        <begin position="1"/>
        <end position="94"/>
    </location>
</feature>
<accession>A8MED4</accession>
<reference key="1">
    <citation type="submission" date="2007-10" db="EMBL/GenBank/DDBJ databases">
        <title>Complete genome of Alkaliphilus oremlandii OhILAs.</title>
        <authorList>
            <person name="Copeland A."/>
            <person name="Lucas S."/>
            <person name="Lapidus A."/>
            <person name="Barry K."/>
            <person name="Detter J.C."/>
            <person name="Glavina del Rio T."/>
            <person name="Hammon N."/>
            <person name="Israni S."/>
            <person name="Dalin E."/>
            <person name="Tice H."/>
            <person name="Pitluck S."/>
            <person name="Chain P."/>
            <person name="Malfatti S."/>
            <person name="Shin M."/>
            <person name="Vergez L."/>
            <person name="Schmutz J."/>
            <person name="Larimer F."/>
            <person name="Land M."/>
            <person name="Hauser L."/>
            <person name="Kyrpides N."/>
            <person name="Mikhailova N."/>
            <person name="Stolz J.F."/>
            <person name="Dawson A."/>
            <person name="Fisher E."/>
            <person name="Crable B."/>
            <person name="Perera E."/>
            <person name="Lisak J."/>
            <person name="Ranganathan M."/>
            <person name="Basu P."/>
            <person name="Richardson P."/>
        </authorList>
    </citation>
    <scope>NUCLEOTIDE SEQUENCE [LARGE SCALE GENOMIC DNA]</scope>
    <source>
        <strain>OhILAs</strain>
    </source>
</reference>
<keyword id="KW-1185">Reference proteome</keyword>
<keyword id="KW-0687">Ribonucleoprotein</keyword>
<keyword id="KW-0689">Ribosomal protein</keyword>
<keyword id="KW-0694">RNA-binding</keyword>
<keyword id="KW-0699">rRNA-binding</keyword>
<dbReference type="EMBL" id="CP000853">
    <property type="protein sequence ID" value="ABW17605.1"/>
    <property type="molecule type" value="Genomic_DNA"/>
</dbReference>
<dbReference type="RefSeq" id="WP_012157920.1">
    <property type="nucleotide sequence ID" value="NC_009922.1"/>
</dbReference>
<dbReference type="SMR" id="A8MED4"/>
<dbReference type="STRING" id="350688.Clos_0035"/>
<dbReference type="KEGG" id="aoe:Clos_0035"/>
<dbReference type="eggNOG" id="COG0360">
    <property type="taxonomic scope" value="Bacteria"/>
</dbReference>
<dbReference type="HOGENOM" id="CLU_113441_5_1_9"/>
<dbReference type="OrthoDB" id="9812702at2"/>
<dbReference type="Proteomes" id="UP000000269">
    <property type="component" value="Chromosome"/>
</dbReference>
<dbReference type="GO" id="GO:0005737">
    <property type="term" value="C:cytoplasm"/>
    <property type="evidence" value="ECO:0007669"/>
    <property type="project" value="UniProtKB-ARBA"/>
</dbReference>
<dbReference type="GO" id="GO:1990904">
    <property type="term" value="C:ribonucleoprotein complex"/>
    <property type="evidence" value="ECO:0007669"/>
    <property type="project" value="UniProtKB-KW"/>
</dbReference>
<dbReference type="GO" id="GO:0005840">
    <property type="term" value="C:ribosome"/>
    <property type="evidence" value="ECO:0007669"/>
    <property type="project" value="UniProtKB-KW"/>
</dbReference>
<dbReference type="GO" id="GO:0070181">
    <property type="term" value="F:small ribosomal subunit rRNA binding"/>
    <property type="evidence" value="ECO:0007669"/>
    <property type="project" value="TreeGrafter"/>
</dbReference>
<dbReference type="GO" id="GO:0003735">
    <property type="term" value="F:structural constituent of ribosome"/>
    <property type="evidence" value="ECO:0007669"/>
    <property type="project" value="InterPro"/>
</dbReference>
<dbReference type="GO" id="GO:0006412">
    <property type="term" value="P:translation"/>
    <property type="evidence" value="ECO:0007669"/>
    <property type="project" value="UniProtKB-UniRule"/>
</dbReference>
<dbReference type="CDD" id="cd00473">
    <property type="entry name" value="bS6"/>
    <property type="match status" value="1"/>
</dbReference>
<dbReference type="FunFam" id="3.30.70.60:FF:000002">
    <property type="entry name" value="30S ribosomal protein S6"/>
    <property type="match status" value="1"/>
</dbReference>
<dbReference type="Gene3D" id="3.30.70.60">
    <property type="match status" value="1"/>
</dbReference>
<dbReference type="HAMAP" id="MF_00360">
    <property type="entry name" value="Ribosomal_bS6"/>
    <property type="match status" value="1"/>
</dbReference>
<dbReference type="InterPro" id="IPR000529">
    <property type="entry name" value="Ribosomal_bS6"/>
</dbReference>
<dbReference type="InterPro" id="IPR020815">
    <property type="entry name" value="Ribosomal_bS6_CS"/>
</dbReference>
<dbReference type="InterPro" id="IPR035980">
    <property type="entry name" value="Ribosomal_bS6_sf"/>
</dbReference>
<dbReference type="InterPro" id="IPR020814">
    <property type="entry name" value="Ribosomal_S6_plastid/chlpt"/>
</dbReference>
<dbReference type="InterPro" id="IPR014717">
    <property type="entry name" value="Transl_elong_EF1B/ribsomal_bS6"/>
</dbReference>
<dbReference type="NCBIfam" id="TIGR00166">
    <property type="entry name" value="S6"/>
    <property type="match status" value="1"/>
</dbReference>
<dbReference type="PANTHER" id="PTHR21011">
    <property type="entry name" value="MITOCHONDRIAL 28S RIBOSOMAL PROTEIN S6"/>
    <property type="match status" value="1"/>
</dbReference>
<dbReference type="PANTHER" id="PTHR21011:SF1">
    <property type="entry name" value="SMALL RIBOSOMAL SUBUNIT PROTEIN BS6M"/>
    <property type="match status" value="1"/>
</dbReference>
<dbReference type="Pfam" id="PF01250">
    <property type="entry name" value="Ribosomal_S6"/>
    <property type="match status" value="1"/>
</dbReference>
<dbReference type="SUPFAM" id="SSF54995">
    <property type="entry name" value="Ribosomal protein S6"/>
    <property type="match status" value="1"/>
</dbReference>
<dbReference type="PROSITE" id="PS01048">
    <property type="entry name" value="RIBOSOMAL_S6"/>
    <property type="match status" value="1"/>
</dbReference>
<proteinExistence type="inferred from homology"/>